<gene>
    <name type="primary">Nap1l1</name>
    <name type="synonym">Nrp</name>
</gene>
<proteinExistence type="evidence at protein level"/>
<comment type="function">
    <text evidence="1 6">Histone chaperone that plays a role in the nuclear import of H2A-H2B and nucleosome assembly. Also participates in several important DNA repair mechanisms: greatly enhances ERCC6-mediated chromatin remodeling which is essential for transcription-coupled nucleotide excision DNA repair. Also stimulates homologous recombination (HR) by RAD51 and RAD54 which is essential in mitotic DNA double strand break (DSB) repair (By similarity). Plays a key role in the regulation of embryonic neurogenesis (PubMed:29490266). Promotes the proliferation of neural progenitors and inhibits neuronal differentiation during cortical development (PubMed:29490266). Regulates neurogenesis via the modulation of RASSF10; regulates RASSF10 expression by promoting SETD1A-mediated H3K4 methylation at the RASSF10 promoter (PubMed:29490266).</text>
</comment>
<comment type="subunit">
    <text evidence="1 6">Homodimer. The dimer binds strongly and sequentially to single and double H2A-H2B heterodimers. Interacts with ERCC6; this interaction increases ERCC6 processivity. Interacts with RAD54 (By similarity). Interacts with SETD1A (PubMed:29490266).</text>
</comment>
<comment type="interaction">
    <interactant intactId="EBI-645055">
        <id>P28656</id>
    </interactant>
    <interactant intactId="EBI-446144">
        <id>Q9WVS7</id>
        <label>Map2k5</label>
    </interactant>
    <organismsDiffer>false</organismsDiffer>
    <experiments>20</experiments>
</comment>
<comment type="subcellular location">
    <subcellularLocation>
        <location evidence="6">Nucleus</location>
    </subcellularLocation>
    <subcellularLocation>
        <location evidence="6">Cytoplasm</location>
    </subcellularLocation>
    <subcellularLocation>
        <location evidence="1">Melanosome</location>
    </subcellularLocation>
</comment>
<comment type="tissue specificity">
    <text evidence="6">Highly expressed in the brain (at protein level) (PubMed:29490266). High expression in cerebral cortex, not in cerebellar cortex.</text>
</comment>
<comment type="developmental stage">
    <text evidence="6">During brain development, expression decreases from 12 dpc to P0. Expressed predominantly but not restricted in the ventricular zone (VZ)/subventricular zone (SVZ), and peak expression is observed at 12.5 dpc, in which the cerebral cortex consists primarily of neural progenitor cells (NPCs). At 15.5 dpc, the expression decreases in the cerebral cortical plate. At 18.5 dpc, when the embryonic neurogenesis period nears its end, the expression throughout the cerebral cortex is lower than that at 12.5 dpc (at protein level).</text>
</comment>
<comment type="domain">
    <text evidence="1">The NAP1L motif is required for the histone chaperone activity.</text>
</comment>
<comment type="domain">
    <text evidence="1">The acidic domains are probably involved in the interaction with histones.</text>
</comment>
<comment type="PTM">
    <text evidence="5">Polyglycylated by TTLL10 on glutamate residues, resulting in polyglycine chains on the gamma-carboxyl group. Both polyglutamylation and polyglycylation modifications can coexist on the same protein on adjacent residues, and lowering polyglycylation levels increases polyglutamylation, and reciprocally.</text>
</comment>
<comment type="PTM">
    <text evidence="4">Polyglutamylated by TTLL4 on glutamate residues, resulting in polyglutamate chains on the gamma-carboxyl group. Both polyglutamylation and polyglycylation modifications can coexist on the same protein on adjacent residues, and lowering polyglycylation levels increases polyglutamylation, and reciprocally.</text>
</comment>
<comment type="disruption phenotype">
    <text evidence="6">Mice show abnormal embryonic neurogenesis.</text>
</comment>
<comment type="similarity">
    <text evidence="7">Belongs to the nucleosome assembly protein (NAP) family.</text>
</comment>
<protein>
    <recommendedName>
        <fullName>Nucleosome assembly protein 1-like 1</fullName>
    </recommendedName>
    <alternativeName>
        <fullName>Brain protein DN38</fullName>
    </alternativeName>
    <alternativeName>
        <fullName>NAP-1-related protein</fullName>
    </alternativeName>
</protein>
<dbReference type="EMBL" id="D12618">
    <property type="protein sequence ID" value="BAA02142.1"/>
    <property type="molecule type" value="mRNA"/>
</dbReference>
<dbReference type="EMBL" id="AK050375">
    <property type="protein sequence ID" value="BAC34219.1"/>
    <property type="molecule type" value="mRNA"/>
</dbReference>
<dbReference type="EMBL" id="AK136161">
    <property type="protein sequence ID" value="BAE22850.1"/>
    <property type="molecule type" value="mRNA"/>
</dbReference>
<dbReference type="EMBL" id="AK145766">
    <property type="protein sequence ID" value="BAE26637.1"/>
    <property type="molecule type" value="mRNA"/>
</dbReference>
<dbReference type="EMBL" id="BC076591">
    <property type="protein sequence ID" value="AAH76591.1"/>
    <property type="molecule type" value="mRNA"/>
</dbReference>
<dbReference type="EMBL" id="X61449">
    <property type="protein sequence ID" value="CAA43689.1"/>
    <property type="molecule type" value="mRNA"/>
</dbReference>
<dbReference type="CCDS" id="CCDS36058.1"/>
<dbReference type="PIR" id="JS0707">
    <property type="entry name" value="JS0707"/>
</dbReference>
<dbReference type="RefSeq" id="NP_056596.1">
    <property type="nucleotide sequence ID" value="NM_015781.5"/>
</dbReference>
<dbReference type="RefSeq" id="XP_030101038.1">
    <property type="nucleotide sequence ID" value="XM_030245178.2"/>
</dbReference>
<dbReference type="SMR" id="P28656"/>
<dbReference type="BioGRID" id="207325">
    <property type="interactions" value="16"/>
</dbReference>
<dbReference type="FunCoup" id="P28656">
    <property type="interactions" value="4134"/>
</dbReference>
<dbReference type="IntAct" id="P28656">
    <property type="interactions" value="6"/>
</dbReference>
<dbReference type="MINT" id="P28656"/>
<dbReference type="STRING" id="10090.ENSMUSP00000151972"/>
<dbReference type="GlyGen" id="P28656">
    <property type="glycosylation" value="1 site, 1 O-linked glycan (1 site)"/>
</dbReference>
<dbReference type="iPTMnet" id="P28656"/>
<dbReference type="PhosphoSitePlus" id="P28656"/>
<dbReference type="SwissPalm" id="P28656"/>
<dbReference type="jPOST" id="P28656"/>
<dbReference type="PaxDb" id="10090-ENSMUSP00000126850"/>
<dbReference type="PeptideAtlas" id="P28656"/>
<dbReference type="ProteomicsDB" id="293710"/>
<dbReference type="Pumba" id="P28656"/>
<dbReference type="Antibodypedia" id="29629">
    <property type="antibodies" value="205 antibodies from 30 providers"/>
</dbReference>
<dbReference type="DNASU" id="53605"/>
<dbReference type="Ensembl" id="ENSMUST00000065917.16">
    <property type="protein sequence ID" value="ENSMUSP00000070068.9"/>
    <property type="gene ID" value="ENSMUSG00000058799.17"/>
</dbReference>
<dbReference type="Ensembl" id="ENSMUST00000217908.2">
    <property type="protein sequence ID" value="ENSMUSP00000151750.2"/>
    <property type="gene ID" value="ENSMUSG00000058799.17"/>
</dbReference>
<dbReference type="Ensembl" id="ENSMUST00000218828.2">
    <property type="protein sequence ID" value="ENSMUSP00000151972.2"/>
    <property type="gene ID" value="ENSMUSG00000058799.17"/>
</dbReference>
<dbReference type="GeneID" id="53605"/>
<dbReference type="KEGG" id="mmu:53605"/>
<dbReference type="UCSC" id="uc007hac.2">
    <property type="organism name" value="mouse"/>
</dbReference>
<dbReference type="AGR" id="MGI:1855693"/>
<dbReference type="CTD" id="4673"/>
<dbReference type="MGI" id="MGI:1855693">
    <property type="gene designation" value="Nap1l1"/>
</dbReference>
<dbReference type="VEuPathDB" id="HostDB:ENSMUSG00000058799"/>
<dbReference type="eggNOG" id="KOG1507">
    <property type="taxonomic scope" value="Eukaryota"/>
</dbReference>
<dbReference type="GeneTree" id="ENSGT00940000153362"/>
<dbReference type="HOGENOM" id="CLU_038841_3_0_1"/>
<dbReference type="InParanoid" id="P28656"/>
<dbReference type="OMA" id="AAECKQN"/>
<dbReference type="OrthoDB" id="27325at2759"/>
<dbReference type="PhylomeDB" id="P28656"/>
<dbReference type="BioGRID-ORCS" id="53605">
    <property type="hits" value="1 hit in 82 CRISPR screens"/>
</dbReference>
<dbReference type="ChiTaRS" id="Nap1l1">
    <property type="organism name" value="mouse"/>
</dbReference>
<dbReference type="PRO" id="PR:P28656"/>
<dbReference type="Proteomes" id="UP000000589">
    <property type="component" value="Chromosome 10"/>
</dbReference>
<dbReference type="RNAct" id="P28656">
    <property type="molecule type" value="protein"/>
</dbReference>
<dbReference type="Bgee" id="ENSMUSG00000058799">
    <property type="expression patterns" value="Expressed in embryonic post-anal tail and 273 other cell types or tissues"/>
</dbReference>
<dbReference type="ExpressionAtlas" id="P28656">
    <property type="expression patterns" value="baseline and differential"/>
</dbReference>
<dbReference type="GO" id="GO:0005737">
    <property type="term" value="C:cytoplasm"/>
    <property type="evidence" value="ECO:0000314"/>
    <property type="project" value="UniProtKB"/>
</dbReference>
<dbReference type="GO" id="GO:0042470">
    <property type="term" value="C:melanosome"/>
    <property type="evidence" value="ECO:0007669"/>
    <property type="project" value="UniProtKB-SubCell"/>
</dbReference>
<dbReference type="GO" id="GO:0005634">
    <property type="term" value="C:nucleus"/>
    <property type="evidence" value="ECO:0000314"/>
    <property type="project" value="UniProtKB"/>
</dbReference>
<dbReference type="GO" id="GO:0140713">
    <property type="term" value="F:histone chaperone activity"/>
    <property type="evidence" value="ECO:0007669"/>
    <property type="project" value="Ensembl"/>
</dbReference>
<dbReference type="GO" id="GO:0007399">
    <property type="term" value="P:nervous system development"/>
    <property type="evidence" value="ECO:0007669"/>
    <property type="project" value="UniProtKB-KW"/>
</dbReference>
<dbReference type="GO" id="GO:0006334">
    <property type="term" value="P:nucleosome assembly"/>
    <property type="evidence" value="ECO:0007669"/>
    <property type="project" value="InterPro"/>
</dbReference>
<dbReference type="GO" id="GO:2000179">
    <property type="term" value="P:positive regulation of neural precursor cell proliferation"/>
    <property type="evidence" value="ECO:0000315"/>
    <property type="project" value="UniProtKB"/>
</dbReference>
<dbReference type="GO" id="GO:0050769">
    <property type="term" value="P:positive regulation of neurogenesis"/>
    <property type="evidence" value="ECO:0000315"/>
    <property type="project" value="UniProtKB"/>
</dbReference>
<dbReference type="FunFam" id="1.20.5.1500:FF:000001">
    <property type="entry name" value="Nucleosome assembly protein 1-like 1"/>
    <property type="match status" value="1"/>
</dbReference>
<dbReference type="FunFam" id="3.30.1120.90:FF:000001">
    <property type="entry name" value="Nucleosome assembly protein 1-like 1"/>
    <property type="match status" value="1"/>
</dbReference>
<dbReference type="Gene3D" id="1.20.5.1500">
    <property type="match status" value="1"/>
</dbReference>
<dbReference type="Gene3D" id="3.30.1120.90">
    <property type="entry name" value="Nucleosome assembly protein"/>
    <property type="match status" value="1"/>
</dbReference>
<dbReference type="InterPro" id="IPR037231">
    <property type="entry name" value="NAP-like_sf"/>
</dbReference>
<dbReference type="InterPro" id="IPR002164">
    <property type="entry name" value="NAP_family"/>
</dbReference>
<dbReference type="PANTHER" id="PTHR11875">
    <property type="entry name" value="TESTIS-SPECIFIC Y-ENCODED PROTEIN"/>
    <property type="match status" value="1"/>
</dbReference>
<dbReference type="Pfam" id="PF00956">
    <property type="entry name" value="NAP"/>
    <property type="match status" value="1"/>
</dbReference>
<dbReference type="SUPFAM" id="SSF143113">
    <property type="entry name" value="NAP-like"/>
    <property type="match status" value="1"/>
</dbReference>
<organism>
    <name type="scientific">Mus musculus</name>
    <name type="common">Mouse</name>
    <dbReference type="NCBI Taxonomy" id="10090"/>
    <lineage>
        <taxon>Eukaryota</taxon>
        <taxon>Metazoa</taxon>
        <taxon>Chordata</taxon>
        <taxon>Craniata</taxon>
        <taxon>Vertebrata</taxon>
        <taxon>Euteleostomi</taxon>
        <taxon>Mammalia</taxon>
        <taxon>Eutheria</taxon>
        <taxon>Euarchontoglires</taxon>
        <taxon>Glires</taxon>
        <taxon>Rodentia</taxon>
        <taxon>Myomorpha</taxon>
        <taxon>Muroidea</taxon>
        <taxon>Muridae</taxon>
        <taxon>Murinae</taxon>
        <taxon>Mus</taxon>
        <taxon>Mus</taxon>
    </lineage>
</organism>
<evidence type="ECO:0000250" key="1">
    <source>
        <dbReference type="UniProtKB" id="P55209"/>
    </source>
</evidence>
<evidence type="ECO:0000255" key="2"/>
<evidence type="ECO:0000256" key="3">
    <source>
        <dbReference type="SAM" id="MobiDB-lite"/>
    </source>
</evidence>
<evidence type="ECO:0000269" key="4">
    <source>
    </source>
</evidence>
<evidence type="ECO:0000269" key="5">
    <source>
    </source>
</evidence>
<evidence type="ECO:0000269" key="6">
    <source>
    </source>
</evidence>
<evidence type="ECO:0000305" key="7"/>
<evidence type="ECO:0007744" key="8">
    <source>
    </source>
</evidence>
<evidence type="ECO:0007744" key="9">
    <source>
    </source>
</evidence>
<reference key="1">
    <citation type="submission" date="1992-07" db="EMBL/GenBank/DDBJ databases">
        <authorList>
            <person name="Okuda A."/>
        </authorList>
    </citation>
    <scope>NUCLEOTIDE SEQUENCE [MRNA]</scope>
</reference>
<reference key="2">
    <citation type="journal article" date="2005" name="Science">
        <title>The transcriptional landscape of the mammalian genome.</title>
        <authorList>
            <person name="Carninci P."/>
            <person name="Kasukawa T."/>
            <person name="Katayama S."/>
            <person name="Gough J."/>
            <person name="Frith M.C."/>
            <person name="Maeda N."/>
            <person name="Oyama R."/>
            <person name="Ravasi T."/>
            <person name="Lenhard B."/>
            <person name="Wells C."/>
            <person name="Kodzius R."/>
            <person name="Shimokawa K."/>
            <person name="Bajic V.B."/>
            <person name="Brenner S.E."/>
            <person name="Batalov S."/>
            <person name="Forrest A.R."/>
            <person name="Zavolan M."/>
            <person name="Davis M.J."/>
            <person name="Wilming L.G."/>
            <person name="Aidinis V."/>
            <person name="Allen J.E."/>
            <person name="Ambesi-Impiombato A."/>
            <person name="Apweiler R."/>
            <person name="Aturaliya R.N."/>
            <person name="Bailey T.L."/>
            <person name="Bansal M."/>
            <person name="Baxter L."/>
            <person name="Beisel K.W."/>
            <person name="Bersano T."/>
            <person name="Bono H."/>
            <person name="Chalk A.M."/>
            <person name="Chiu K.P."/>
            <person name="Choudhary V."/>
            <person name="Christoffels A."/>
            <person name="Clutterbuck D.R."/>
            <person name="Crowe M.L."/>
            <person name="Dalla E."/>
            <person name="Dalrymple B.P."/>
            <person name="de Bono B."/>
            <person name="Della Gatta G."/>
            <person name="di Bernardo D."/>
            <person name="Down T."/>
            <person name="Engstrom P."/>
            <person name="Fagiolini M."/>
            <person name="Faulkner G."/>
            <person name="Fletcher C.F."/>
            <person name="Fukushima T."/>
            <person name="Furuno M."/>
            <person name="Futaki S."/>
            <person name="Gariboldi M."/>
            <person name="Georgii-Hemming P."/>
            <person name="Gingeras T.R."/>
            <person name="Gojobori T."/>
            <person name="Green R.E."/>
            <person name="Gustincich S."/>
            <person name="Harbers M."/>
            <person name="Hayashi Y."/>
            <person name="Hensch T.K."/>
            <person name="Hirokawa N."/>
            <person name="Hill D."/>
            <person name="Huminiecki L."/>
            <person name="Iacono M."/>
            <person name="Ikeo K."/>
            <person name="Iwama A."/>
            <person name="Ishikawa T."/>
            <person name="Jakt M."/>
            <person name="Kanapin A."/>
            <person name="Katoh M."/>
            <person name="Kawasawa Y."/>
            <person name="Kelso J."/>
            <person name="Kitamura H."/>
            <person name="Kitano H."/>
            <person name="Kollias G."/>
            <person name="Krishnan S.P."/>
            <person name="Kruger A."/>
            <person name="Kummerfeld S.K."/>
            <person name="Kurochkin I.V."/>
            <person name="Lareau L.F."/>
            <person name="Lazarevic D."/>
            <person name="Lipovich L."/>
            <person name="Liu J."/>
            <person name="Liuni S."/>
            <person name="McWilliam S."/>
            <person name="Madan Babu M."/>
            <person name="Madera M."/>
            <person name="Marchionni L."/>
            <person name="Matsuda H."/>
            <person name="Matsuzawa S."/>
            <person name="Miki H."/>
            <person name="Mignone F."/>
            <person name="Miyake S."/>
            <person name="Morris K."/>
            <person name="Mottagui-Tabar S."/>
            <person name="Mulder N."/>
            <person name="Nakano N."/>
            <person name="Nakauchi H."/>
            <person name="Ng P."/>
            <person name="Nilsson R."/>
            <person name="Nishiguchi S."/>
            <person name="Nishikawa S."/>
            <person name="Nori F."/>
            <person name="Ohara O."/>
            <person name="Okazaki Y."/>
            <person name="Orlando V."/>
            <person name="Pang K.C."/>
            <person name="Pavan W.J."/>
            <person name="Pavesi G."/>
            <person name="Pesole G."/>
            <person name="Petrovsky N."/>
            <person name="Piazza S."/>
            <person name="Reed J."/>
            <person name="Reid J.F."/>
            <person name="Ring B.Z."/>
            <person name="Ringwald M."/>
            <person name="Rost B."/>
            <person name="Ruan Y."/>
            <person name="Salzberg S.L."/>
            <person name="Sandelin A."/>
            <person name="Schneider C."/>
            <person name="Schoenbach C."/>
            <person name="Sekiguchi K."/>
            <person name="Semple C.A."/>
            <person name="Seno S."/>
            <person name="Sessa L."/>
            <person name="Sheng Y."/>
            <person name="Shibata Y."/>
            <person name="Shimada H."/>
            <person name="Shimada K."/>
            <person name="Silva D."/>
            <person name="Sinclair B."/>
            <person name="Sperling S."/>
            <person name="Stupka E."/>
            <person name="Sugiura K."/>
            <person name="Sultana R."/>
            <person name="Takenaka Y."/>
            <person name="Taki K."/>
            <person name="Tammoja K."/>
            <person name="Tan S.L."/>
            <person name="Tang S."/>
            <person name="Taylor M.S."/>
            <person name="Tegner J."/>
            <person name="Teichmann S.A."/>
            <person name="Ueda H.R."/>
            <person name="van Nimwegen E."/>
            <person name="Verardo R."/>
            <person name="Wei C.L."/>
            <person name="Yagi K."/>
            <person name="Yamanishi H."/>
            <person name="Zabarovsky E."/>
            <person name="Zhu S."/>
            <person name="Zimmer A."/>
            <person name="Hide W."/>
            <person name="Bult C."/>
            <person name="Grimmond S.M."/>
            <person name="Teasdale R.D."/>
            <person name="Liu E.T."/>
            <person name="Brusic V."/>
            <person name="Quackenbush J."/>
            <person name="Wahlestedt C."/>
            <person name="Mattick J.S."/>
            <person name="Hume D.A."/>
            <person name="Kai C."/>
            <person name="Sasaki D."/>
            <person name="Tomaru Y."/>
            <person name="Fukuda S."/>
            <person name="Kanamori-Katayama M."/>
            <person name="Suzuki M."/>
            <person name="Aoki J."/>
            <person name="Arakawa T."/>
            <person name="Iida J."/>
            <person name="Imamura K."/>
            <person name="Itoh M."/>
            <person name="Kato T."/>
            <person name="Kawaji H."/>
            <person name="Kawagashira N."/>
            <person name="Kawashima T."/>
            <person name="Kojima M."/>
            <person name="Kondo S."/>
            <person name="Konno H."/>
            <person name="Nakano K."/>
            <person name="Ninomiya N."/>
            <person name="Nishio T."/>
            <person name="Okada M."/>
            <person name="Plessy C."/>
            <person name="Shibata K."/>
            <person name="Shiraki T."/>
            <person name="Suzuki S."/>
            <person name="Tagami M."/>
            <person name="Waki K."/>
            <person name="Watahiki A."/>
            <person name="Okamura-Oho Y."/>
            <person name="Suzuki H."/>
            <person name="Kawai J."/>
            <person name="Hayashizaki Y."/>
        </authorList>
    </citation>
    <scope>NUCLEOTIDE SEQUENCE [LARGE SCALE MRNA]</scope>
    <source>
        <strain>C57BL/6J</strain>
        <tissue>Egg</tissue>
        <tissue>Liver</tissue>
    </source>
</reference>
<reference key="3">
    <citation type="journal article" date="2004" name="Genome Res.">
        <title>The status, quality, and expansion of the NIH full-length cDNA project: the Mammalian Gene Collection (MGC).</title>
        <authorList>
            <consortium name="The MGC Project Team"/>
        </authorList>
    </citation>
    <scope>NUCLEOTIDE SEQUENCE [LARGE SCALE MRNA]</scope>
    <source>
        <strain>C57BL/6J</strain>
        <tissue>Eye</tissue>
    </source>
</reference>
<reference key="4">
    <citation type="journal article" date="1990" name="Eur. J. Neurosci.">
        <title>A collection of cDNA clones with specific expression patterns in mouse brain.</title>
        <authorList>
            <person name="Kato K."/>
        </authorList>
    </citation>
    <scope>NUCLEOTIDE SEQUENCE [LARGE SCALE MRNA] OF 50-391</scope>
    <source>
        <strain>BALB/cJ</strain>
        <tissue>Brain</tissue>
    </source>
</reference>
<reference key="5">
    <citation type="submission" date="2009-01" db="UniProtKB">
        <authorList>
            <person name="Lubec G."/>
            <person name="Sunyer B."/>
            <person name="Chen W.-Q."/>
        </authorList>
    </citation>
    <scope>PROTEIN SEQUENCE OF 267-275</scope>
    <scope>IDENTIFICATION BY MASS SPECTROMETRY</scope>
    <source>
        <strain>OF1</strain>
        <tissue>Hippocampus</tissue>
    </source>
</reference>
<reference key="6">
    <citation type="journal article" date="2004" name="Mol. Cell. Proteomics">
        <title>Phosphoproteomic analysis of the developing mouse brain.</title>
        <authorList>
            <person name="Ballif B.A."/>
            <person name="Villen J."/>
            <person name="Beausoleil S.A."/>
            <person name="Schwartz D."/>
            <person name="Gygi S.P."/>
        </authorList>
    </citation>
    <scope>IDENTIFICATION BY MASS SPECTROMETRY [LARGE SCALE ANALYSIS]</scope>
    <source>
        <tissue>Embryonic brain</tissue>
    </source>
</reference>
<reference key="7">
    <citation type="journal article" date="2007" name="Mol. Cell">
        <title>A targeted multienzyme mechanism for selective microtubule polyglutamylation.</title>
        <authorList>
            <person name="van Dijk J."/>
            <person name="Rogowski K."/>
            <person name="Miro J."/>
            <person name="Lacroix B."/>
            <person name="Edde B."/>
            <person name="Janke C."/>
        </authorList>
    </citation>
    <scope>GLUTAMYLATION</scope>
    <source>
        <strain>C57BL/6J</strain>
        <tissue>Testis</tissue>
    </source>
</reference>
<reference key="8">
    <citation type="journal article" date="2008" name="FEBS Lett.">
        <title>TTLL10 is a protein polyglycylase that can modify nucleosome assembly protein 1.</title>
        <authorList>
            <person name="Ikegami K."/>
            <person name="Horigome D."/>
            <person name="Mukai M."/>
            <person name="Livnat I."/>
            <person name="MacGregor G.R."/>
            <person name="Setou M."/>
        </authorList>
    </citation>
    <scope>GLYCYLATION AT GLU-359 AND GLU-360</scope>
    <scope>MUTAGENESIS OF GLU-359 AND GLU-360</scope>
</reference>
<reference key="9">
    <citation type="journal article" date="2009" name="Mol. Cell. Proteomics">
        <title>Large scale localization of protein phosphorylation by use of electron capture dissociation mass spectrometry.</title>
        <authorList>
            <person name="Sweet S.M."/>
            <person name="Bailey C.M."/>
            <person name="Cunningham D.L."/>
            <person name="Heath J.K."/>
            <person name="Cooper H.J."/>
        </authorList>
    </citation>
    <scope>IDENTIFICATION BY MASS SPECTROMETRY [LARGE SCALE ANALYSIS]</scope>
    <source>
        <tissue>Embryonic fibroblast</tissue>
    </source>
</reference>
<reference key="10">
    <citation type="journal article" date="2010" name="Cell">
        <title>A tissue-specific atlas of mouse protein phosphorylation and expression.</title>
        <authorList>
            <person name="Huttlin E.L."/>
            <person name="Jedrychowski M.P."/>
            <person name="Elias J.E."/>
            <person name="Goswami T."/>
            <person name="Rad R."/>
            <person name="Beausoleil S.A."/>
            <person name="Villen J."/>
            <person name="Haas W."/>
            <person name="Sowa M.E."/>
            <person name="Gygi S.P."/>
        </authorList>
    </citation>
    <scope>PHOSPHORYLATION [LARGE SCALE ANALYSIS] AT THR-62; THR-64 AND SER-143</scope>
    <scope>IDENTIFICATION BY MASS SPECTROMETRY [LARGE SCALE ANALYSIS]</scope>
    <source>
        <tissue>Brain</tissue>
        <tissue>Brown adipose tissue</tissue>
        <tissue>Heart</tissue>
        <tissue>Kidney</tissue>
        <tissue>Liver</tissue>
        <tissue>Lung</tissue>
        <tissue>Pancreas</tissue>
        <tissue>Spleen</tissue>
        <tissue>Testis</tissue>
    </source>
</reference>
<reference key="11">
    <citation type="journal article" date="2013" name="Mol. Cell">
        <title>SIRT5-mediated lysine desuccinylation impacts diverse metabolic pathways.</title>
        <authorList>
            <person name="Park J."/>
            <person name="Chen Y."/>
            <person name="Tishkoff D.X."/>
            <person name="Peng C."/>
            <person name="Tan M."/>
            <person name="Dai L."/>
            <person name="Xie Z."/>
            <person name="Zhang Y."/>
            <person name="Zwaans B.M."/>
            <person name="Skinner M.E."/>
            <person name="Lombard D.B."/>
            <person name="Zhao Y."/>
        </authorList>
    </citation>
    <scope>ACETYLATION [LARGE SCALE ANALYSIS] AT LYS-116</scope>
    <scope>IDENTIFICATION BY MASS SPECTROMETRY [LARGE SCALE ANALYSIS]</scope>
    <source>
        <tissue>Embryonic fibroblast</tissue>
    </source>
</reference>
<reference key="12">
    <citation type="journal article" date="2018" name="Cell Rep.">
        <title>Nap1l1 controls embryonic neural progenitor cell proliferation and differentiation in the developing brain.</title>
        <authorList>
            <person name="Qiao H."/>
            <person name="Li Y."/>
            <person name="Feng C."/>
            <person name="Duo S."/>
            <person name="Ji F."/>
            <person name="Jiao J."/>
        </authorList>
    </citation>
    <scope>FUNCTION</scope>
    <scope>SUBCELLULAR LOCATION</scope>
    <scope>TISSUE SPECIFICITY</scope>
    <scope>DEVELOPMENTAL STAGE</scope>
    <scope>DISRUPTION PHENOTYPE</scope>
    <scope>INTERACTION WITH SETD1A</scope>
</reference>
<accession>P28656</accession>
<accession>Q3UL14</accession>
<feature type="initiator methionine" description="Removed" evidence="1">
    <location>
        <position position="1"/>
    </location>
</feature>
<feature type="chain" id="PRO_0000185653" description="Nucleosome assembly protein 1-like 1">
    <location>
        <begin position="2"/>
        <end position="388"/>
    </location>
</feature>
<feature type="propeptide" id="PRO_0000396686" description="Removed in mature form" evidence="1">
    <location>
        <begin position="389"/>
        <end position="391"/>
    </location>
</feature>
<feature type="region of interest" description="Disordered" evidence="3">
    <location>
        <begin position="1"/>
        <end position="32"/>
    </location>
</feature>
<feature type="region of interest" description="Disordered" evidence="3">
    <location>
        <begin position="131"/>
        <end position="163"/>
    </location>
</feature>
<feature type="region of interest" description="Disordered" evidence="3">
    <location>
        <begin position="346"/>
        <end position="391"/>
    </location>
</feature>
<feature type="short sequence motif" description="NAP1L motif" evidence="1">
    <location>
        <begin position="125"/>
        <end position="150"/>
    </location>
</feature>
<feature type="short sequence motif" description="Nuclear localization signal" evidence="2">
    <location>
        <begin position="273"/>
        <end position="279"/>
    </location>
</feature>
<feature type="compositionally biased region" description="Basic and acidic residues" evidence="3">
    <location>
        <begin position="1"/>
        <end position="10"/>
    </location>
</feature>
<feature type="compositionally biased region" description="Acidic residues" evidence="3">
    <location>
        <begin position="11"/>
        <end position="28"/>
    </location>
</feature>
<feature type="compositionally biased region" description="Acidic residues" evidence="3">
    <location>
        <begin position="131"/>
        <end position="143"/>
    </location>
</feature>
<feature type="compositionally biased region" description="Basic and acidic residues" evidence="3">
    <location>
        <begin position="144"/>
        <end position="163"/>
    </location>
</feature>
<feature type="compositionally biased region" description="Acidic residues" evidence="3">
    <location>
        <begin position="346"/>
        <end position="376"/>
    </location>
</feature>
<feature type="compositionally biased region" description="Basic and acidic residues" evidence="3">
    <location>
        <begin position="377"/>
        <end position="391"/>
    </location>
</feature>
<feature type="modified residue" description="N-acetylalanine" evidence="1">
    <location>
        <position position="2"/>
    </location>
</feature>
<feature type="modified residue" description="Phosphoserine" evidence="1">
    <location>
        <position position="10"/>
    </location>
</feature>
<feature type="modified residue" description="Phosphothreonine" evidence="8">
    <location>
        <position position="62"/>
    </location>
</feature>
<feature type="modified residue" description="Phosphothreonine" evidence="8">
    <location>
        <position position="64"/>
    </location>
</feature>
<feature type="modified residue" description="Phosphoserine" evidence="1">
    <location>
        <position position="69"/>
    </location>
</feature>
<feature type="modified residue" description="N6-acetyllysine" evidence="9">
    <location>
        <position position="116"/>
    </location>
</feature>
<feature type="modified residue" description="Phosphoserine" evidence="8">
    <location>
        <position position="143"/>
    </location>
</feature>
<feature type="modified residue" description="5-glutamyl polyglycine" evidence="5">
    <location>
        <position position="359"/>
    </location>
</feature>
<feature type="modified residue" description="5-glutamyl polyglycine" evidence="5">
    <location>
        <position position="360"/>
    </location>
</feature>
<feature type="modified residue" description="Cysteine methyl ester" evidence="7">
    <location>
        <position position="388"/>
    </location>
</feature>
<feature type="lipid moiety-binding region" description="S-farnesyl cysteine" evidence="1">
    <location>
        <position position="388"/>
    </location>
</feature>
<feature type="mutagenesis site" description="Reduced polyglycylation." evidence="5">
    <original>E</original>
    <variation>D</variation>
    <location>
        <position position="359"/>
    </location>
</feature>
<feature type="mutagenesis site" description="Reduced polyglycylation." evidence="5">
    <original>E</original>
    <variation>D</variation>
    <location>
        <position position="360"/>
    </location>
</feature>
<feature type="sequence conflict" description="In Ref. 4; CAA43689." evidence="7" ref="4">
    <original>YDPKKDQNPAECKQ</original>
    <variation>MTQRRIRTQPSASSSE</variation>
    <location>
        <begin position="377"/>
        <end position="390"/>
    </location>
</feature>
<sequence length="391" mass="45345">MADIDNKEQSELDQDLEDVEEVEEEETGEETKIKARQLTVQMMQNPQILAALQERLDGLVDTPTGYIESLPKVVKRRVNALKNLQVKCAQIEAKFYEEVHDLERKYAVLYQPLFDKRFEIINAIYEPTEEECEWKPDEEDEVSEELKEKAKIEDEKKDEEKEDPKGIPEFWLTVFKNVDLLSDMVQEHDEPILKHLKDIKVKFSDAGQPMSFVLEFHFEPNDYFTNEVLTKTYRMRSEPDDSDPFSFDGPEIMGCTGCQIDWKKGKNVTLKTIKKKQKHKGRGTVRTVTKTVSNDSFFNFFAPPEVPENGDLDDDAEAILAADFEIGHFLRERIIPRSVLYFTGEAIEDDDDDYDEEGEEADEEGEEEGDEENDPDYDPKKDQNPAECKQQ</sequence>
<keyword id="KW-0007">Acetylation</keyword>
<keyword id="KW-0963">Cytoplasm</keyword>
<keyword id="KW-0903">Direct protein sequencing</keyword>
<keyword id="KW-1017">Isopeptide bond</keyword>
<keyword id="KW-0449">Lipoprotein</keyword>
<keyword id="KW-0488">Methylation</keyword>
<keyword id="KW-0524">Neurogenesis</keyword>
<keyword id="KW-0539">Nucleus</keyword>
<keyword id="KW-0597">Phosphoprotein</keyword>
<keyword id="KW-0636">Prenylation</keyword>
<keyword id="KW-1185">Reference proteome</keyword>
<name>NP1L1_MOUSE</name>